<keyword id="KW-1015">Disulfide bond</keyword>
<keyword id="KW-1170">Fusion of virus membrane with host endosomal membrane</keyword>
<keyword id="KW-1168">Fusion of virus membrane with host membrane</keyword>
<keyword id="KW-0325">Glycoprotein</keyword>
<keyword id="KW-0348">Hemagglutinin</keyword>
<keyword id="KW-1032">Host cell membrane</keyword>
<keyword id="KW-1043">Host membrane</keyword>
<keyword id="KW-0945">Host-virus interaction</keyword>
<keyword id="KW-0449">Lipoprotein</keyword>
<keyword id="KW-0472">Membrane</keyword>
<keyword id="KW-0564">Palmitate</keyword>
<keyword id="KW-0812">Transmembrane</keyword>
<keyword id="KW-1161">Viral attachment to host cell</keyword>
<keyword id="KW-0261">Viral envelope protein</keyword>
<keyword id="KW-1162">Viral penetration into host cytoplasm</keyword>
<keyword id="KW-0946">Virion</keyword>
<keyword id="KW-1160">Virus entry into host cell</keyword>
<protein>
    <recommendedName>
        <fullName>Hemagglutinin</fullName>
    </recommendedName>
    <component>
        <recommendedName>
            <fullName>Hemagglutinin HA1 chain</fullName>
        </recommendedName>
    </component>
</protein>
<feature type="chain" id="PRO_0000039110" description="Hemagglutinin HA1 chain">
    <location>
        <begin position="1"/>
        <end position="347"/>
    </location>
</feature>
<feature type="glycosylation site" description="N-linked (GlcNAc...) asparagine; by host" evidence="2">
    <location>
        <position position="25"/>
    </location>
</feature>
<feature type="glycosylation site" description="N-linked (GlcNAc...) asparagine; by host" evidence="2">
    <location>
        <position position="59"/>
    </location>
</feature>
<feature type="glycosylation site" description="N-linked (GlcNAc...) asparagine; by host" evidence="2">
    <location>
        <position position="145"/>
    </location>
</feature>
<feature type="glycosylation site" description="N-linked (GlcNAc...) asparagine; by host" evidence="2">
    <location>
        <position position="166"/>
    </location>
</feature>
<feature type="glycosylation site" description="N-linked (GlcNAc...) asparagine; by host" evidence="2">
    <location>
        <position position="304"/>
    </location>
</feature>
<feature type="glycosylation site" description="N-linked (GlcNAc...) asparagine; by host" evidence="2">
    <location>
        <position position="333"/>
    </location>
</feature>
<feature type="non-terminal residue">
    <location>
        <position position="347"/>
    </location>
</feature>
<reference key="1">
    <citation type="journal article" date="1990" name="J. Virol.">
        <title>Evolutionary pattern of the hemagglutinin gene of influenza B viruses isolated in Japan: cocirculating lineages in the same epidemic season.</title>
        <authorList>
            <person name="Kanegae Y."/>
            <person name="Sugita S."/>
            <person name="Endo A."/>
            <person name="Ishida M."/>
            <person name="Senya S."/>
            <person name="Osako K."/>
            <person name="Nerome K."/>
            <person name="Oya A."/>
        </authorList>
    </citation>
    <scope>NUCLEOTIDE SEQUENCE [GENOMIC RNA]</scope>
</reference>
<name>HEMA_INBIB</name>
<proteinExistence type="inferred from homology"/>
<dbReference type="EMBL" id="M36107">
    <property type="protein sequence ID" value="AAA43722.1"/>
    <property type="molecule type" value="Genomic_RNA"/>
</dbReference>
<dbReference type="SMR" id="P18878"/>
<dbReference type="GlyCosmos" id="P18878">
    <property type="glycosylation" value="6 sites, No reported glycans"/>
</dbReference>
<dbReference type="GO" id="GO:0020002">
    <property type="term" value="C:host cell plasma membrane"/>
    <property type="evidence" value="ECO:0007669"/>
    <property type="project" value="UniProtKB-SubCell"/>
</dbReference>
<dbReference type="GO" id="GO:0016020">
    <property type="term" value="C:membrane"/>
    <property type="evidence" value="ECO:0007669"/>
    <property type="project" value="UniProtKB-KW"/>
</dbReference>
<dbReference type="GO" id="GO:0019031">
    <property type="term" value="C:viral envelope"/>
    <property type="evidence" value="ECO:0007669"/>
    <property type="project" value="UniProtKB-KW"/>
</dbReference>
<dbReference type="GO" id="GO:0055036">
    <property type="term" value="C:virion membrane"/>
    <property type="evidence" value="ECO:0007669"/>
    <property type="project" value="UniProtKB-SubCell"/>
</dbReference>
<dbReference type="GO" id="GO:0046789">
    <property type="term" value="F:host cell surface receptor binding"/>
    <property type="evidence" value="ECO:0007669"/>
    <property type="project" value="InterPro"/>
</dbReference>
<dbReference type="GO" id="GO:0039654">
    <property type="term" value="P:fusion of virus membrane with host endosome membrane"/>
    <property type="evidence" value="ECO:0007669"/>
    <property type="project" value="UniProtKB-KW"/>
</dbReference>
<dbReference type="GO" id="GO:0019064">
    <property type="term" value="P:fusion of virus membrane with host plasma membrane"/>
    <property type="evidence" value="ECO:0007669"/>
    <property type="project" value="InterPro"/>
</dbReference>
<dbReference type="GO" id="GO:0046718">
    <property type="term" value="P:symbiont entry into host cell"/>
    <property type="evidence" value="ECO:0007669"/>
    <property type="project" value="UniProtKB-KW"/>
</dbReference>
<dbReference type="GO" id="GO:0019062">
    <property type="term" value="P:virion attachment to host cell"/>
    <property type="evidence" value="ECO:0007669"/>
    <property type="project" value="UniProtKB-KW"/>
</dbReference>
<dbReference type="Gene3D" id="3.90.209.20">
    <property type="match status" value="1"/>
</dbReference>
<dbReference type="Gene3D" id="2.10.77.10">
    <property type="entry name" value="Hemagglutinin Chain A, Domain 2"/>
    <property type="match status" value="1"/>
</dbReference>
<dbReference type="InterPro" id="IPR008980">
    <property type="entry name" value="Capsid_hemagglutn"/>
</dbReference>
<dbReference type="InterPro" id="IPR013828">
    <property type="entry name" value="Hemagglutn_HA1_a/b_dom_sf"/>
</dbReference>
<dbReference type="InterPro" id="IPR001364">
    <property type="entry name" value="Hemagglutn_influenz_A/B"/>
</dbReference>
<dbReference type="Pfam" id="PF00509">
    <property type="entry name" value="Hemagglutinin"/>
    <property type="match status" value="1"/>
</dbReference>
<dbReference type="SUPFAM" id="SSF49818">
    <property type="entry name" value="Viral protein domain"/>
    <property type="match status" value="1"/>
</dbReference>
<gene>
    <name type="primary">HA</name>
</gene>
<organismHost>
    <name type="scientific">Homo sapiens</name>
    <name type="common">Human</name>
    <dbReference type="NCBI Taxonomy" id="9606"/>
</organismHost>
<organism>
    <name type="scientific">Influenza B virus (strain B/Ibaraki/2/1985)</name>
    <dbReference type="NCBI Taxonomy" id="107411"/>
    <lineage>
        <taxon>Viruses</taxon>
        <taxon>Riboviria</taxon>
        <taxon>Orthornavirae</taxon>
        <taxon>Negarnaviricota</taxon>
        <taxon>Polyploviricotina</taxon>
        <taxon>Insthoviricetes</taxon>
        <taxon>Articulavirales</taxon>
        <taxon>Orthomyxoviridae</taxon>
        <taxon>Betainfluenzavirus</taxon>
        <taxon>Betainfluenzavirus influenzae</taxon>
        <taxon>Influenza B virus</taxon>
    </lineage>
</organism>
<sequence length="347" mass="37330">DRICTGITSSNSPHVVKTATQGEVNVTGVIPLTTTPTKSHFANLKGTKTRGKLCPKCLNCTDLDVALGRPKCMGTIPSAKASILHEVKPVTSGCFPIMHDRTKIRQLPNLLRGYENIRLSTHNVINAETAPGGPYIVGTSGSCPNVTNGNGFFATMAWAVPKNNNNKTATNPLTVEVPFICTEGEDQITVWGFHSDDETQMVKLYGDSKPQKFTSSANGVTTHYVSQIGGFPNQAEDGGLPQSGRIVVDHMVQKSGKTGTITYQRGILLPQKVSCPSGRSKVIKGSFPLIGEADCLHEKYGALNKSKPYYTGAHAKAIGNCPIWVKTPLKLANGTKYRPPAKLLKER</sequence>
<comment type="function">
    <text>Binds to sialic acid-containing receptors on the cell surface, bringing about the attachment of the virus particle to the cell. Plays a major role in the determination of host range restriction and virulence. Class I viral fusion protein. Responsible for penetration of the virus into the cell cytoplasm by mediating the fusion of the membrane of the endocytosed virus particle with the endosomal membrane. Low pH in endosomes induce an irreversible conformational change in HA2, releasing the fusion hydrophobic peptide. Several trimers are required to form a competent fusion pore.</text>
</comment>
<comment type="subunit">
    <text>Homotrimer of disulfide-linked HA1-HA2.</text>
</comment>
<comment type="subcellular location">
    <subcellularLocation>
        <location evidence="3">Virion membrane</location>
        <topology evidence="3">Single-pass type I membrane protein</topology>
    </subcellularLocation>
    <subcellularLocation>
        <location>Host apical cell membrane</location>
        <topology>Single-pass type I membrane protein</topology>
    </subcellularLocation>
    <text>Targeted to the apical plasma membrane in epithelial polarized cells through a signal present in the transmembrane domain. Associated with glycosphingolipid- and cholesterol-enriched detergent-resistant lipid rafts.</text>
</comment>
<comment type="PTM">
    <text evidence="1">In natural infection, inactive HA is matured into HA1 and HA2 outside the cell by one or more trypsin-like, arginine-specific endoprotease secreted by the bronchial epithelial cells. One identified protease that may be involved in this process is secreted in lungs by club cells (By similarity).</text>
</comment>
<comment type="PTM">
    <text evidence="1">Palmitoylated.</text>
</comment>
<comment type="miscellaneous">
    <text>Major glycoprotein, comprises over 80% of the envelope proteins present in virus particle.</text>
</comment>
<comment type="miscellaneous">
    <text>The extent of infection into host organism is determined by HA. Influenza viruses bud from the apical surface of polarized epithelial cells (e.g. bronchial epithelial cells) into lumen of lungs and are therefore usually pneumotropic. The reason is that HA is cleaved by tryptase clara which is restricted to lungs. However, HAs of H5 and H7 pantropic avian viruses subtypes can be cleaved by furin and subtilisin-type enzymes, allowing the virus to grow in other organs than lungs.</text>
</comment>
<comment type="miscellaneous">
    <text>The influenza B genome consist of 8 RNA segments. Genetic variation of hemagglutinin and/or neuraminidase genes results in the emergence of new influenza strains. The mechanism of variation can be the result of point mutations or the result of genetic reassortment between segments of two different strains.</text>
</comment>
<comment type="similarity">
    <text evidence="3">Belongs to the influenza viruses hemagglutinin family.</text>
</comment>
<evidence type="ECO:0000250" key="1"/>
<evidence type="ECO:0000255" key="2"/>
<evidence type="ECO:0000305" key="3"/>
<accession>P18878</accession>